<keyword id="KW-0472">Membrane</keyword>
<keyword id="KW-1185">Reference proteome</keyword>
<keyword id="KW-0812">Transmembrane</keyword>
<keyword id="KW-1133">Transmembrane helix</keyword>
<keyword id="KW-0813">Transport</keyword>
<name>AUSY_PENBI</name>
<accession>A0A0F7U0Z9</accession>
<proteinExistence type="inferred from homology"/>
<protein>
    <recommendedName>
        <fullName evidence="4">MFS-type transporter ausY</fullName>
    </recommendedName>
    <alternativeName>
        <fullName evidence="4">Austinoid biosynthesis clusters protein Y</fullName>
    </alternativeName>
</protein>
<comment type="function">
    <text evidence="3">MFS-type transporter; part of the gene cluster A that mediates the biosynthesis of the fungal meroterpenoid acetoxydehydroaustin.</text>
</comment>
<comment type="subcellular location">
    <subcellularLocation>
        <location evidence="1">Membrane</location>
        <topology evidence="1">Multi-pass membrane protein</topology>
    </subcellularLocation>
</comment>
<comment type="miscellaneous">
    <text evidence="6">In A.calidoustus, the austinoid gene cluster lies on a contiguous DNA region, while clusters from E.nidulans and P.brasilianum are split in their respective genomes. Genetic rearrangements provoked variability among the clusters and E.nidulans produces the least number of austionoid derivatives with the end products austinol and dehydroaustinol, while P.brasilianum can produce until acetoxydehydroaustin, and A.calidoustus produces the highest number of identified derivatives.</text>
</comment>
<comment type="similarity">
    <text evidence="5">Belongs to the major facilitator superfamily. TCR/Tet family.</text>
</comment>
<sequence>MITESREHLASKPLNSESIIRLDTPDDKPSLECESIPSGGHISDVSGGPVSTEVKDVNDVSEFEKCAMEEQTHDEVPISASKITVVVAGLVLAVFCMSLDSTILATAIPKIVSQFHSQNEMGWYVSAYSLTLASFSLAFGKIYTFYPAKIVFLITLSLFEAGSLICGAAPNSLALIIGRAIAGIGGTGMYLGSLLLVAEILPFDKVPIITALLAAMYGIAAVVGPLLGGAFADYATWRWCFYINLPMGGLTFLFVFFFVKTGNDRKRAREANNIVSRFLELDPIGVALLIPTLICLLLALEWGGATYSWHSWRLIVLYVVGGCCALGFVGVQIWRQDTATLPPRLLKNRNIWGTILFTFCLNGSFVVLAYYLPIWFQSIKGVSAIQSGIMNLPLILVMVICSLLCSTLVTKLGYYTPFLYLAPIIASTGAGLLSTMHVNSGSSVWIGFQALFGIGLGCGLSLSIVAAQTALPPQDIPTGTAIVAFTQTLAAAVFNFVAQNVFQNQVLSGLAQAAPGVSAAKLTKAGPTMLREIVPADTLPAVLEVYNTAITRAFYVAVGSAALAIFGAIPLQWLSVKNKKIQAVTAHA</sequence>
<gene>
    <name evidence="4" type="primary">ausY</name>
    <name type="ORF">PMG11_09851</name>
</gene>
<evidence type="ECO:0000255" key="1"/>
<evidence type="ECO:0000256" key="2">
    <source>
        <dbReference type="SAM" id="MobiDB-lite"/>
    </source>
</evidence>
<evidence type="ECO:0000269" key="3">
    <source>
    </source>
</evidence>
<evidence type="ECO:0000303" key="4">
    <source>
    </source>
</evidence>
<evidence type="ECO:0000305" key="5"/>
<evidence type="ECO:0000305" key="6">
    <source>
    </source>
</evidence>
<dbReference type="EMBL" id="CDHK01000010">
    <property type="protein sequence ID" value="CEJ61315.1"/>
    <property type="molecule type" value="Genomic_DNA"/>
</dbReference>
<dbReference type="SMR" id="A0A0F7U0Z9"/>
<dbReference type="STRING" id="104259.A0A0F7U0Z9"/>
<dbReference type="OrthoDB" id="10021397at2759"/>
<dbReference type="Proteomes" id="UP000042958">
    <property type="component" value="Unassembled WGS sequence"/>
</dbReference>
<dbReference type="GO" id="GO:0005886">
    <property type="term" value="C:plasma membrane"/>
    <property type="evidence" value="ECO:0007669"/>
    <property type="project" value="TreeGrafter"/>
</dbReference>
<dbReference type="GO" id="GO:0022857">
    <property type="term" value="F:transmembrane transporter activity"/>
    <property type="evidence" value="ECO:0007669"/>
    <property type="project" value="InterPro"/>
</dbReference>
<dbReference type="CDD" id="cd17502">
    <property type="entry name" value="MFS_Azr1_MDR_like"/>
    <property type="match status" value="1"/>
</dbReference>
<dbReference type="FunFam" id="1.20.1250.20:FF:000196">
    <property type="entry name" value="MFS toxin efflux pump (AflT)"/>
    <property type="match status" value="1"/>
</dbReference>
<dbReference type="FunFam" id="1.20.1720.10:FF:000012">
    <property type="entry name" value="MFS toxin efflux pump (AflT)"/>
    <property type="match status" value="1"/>
</dbReference>
<dbReference type="Gene3D" id="1.20.1250.20">
    <property type="entry name" value="MFS general substrate transporter like domains"/>
    <property type="match status" value="2"/>
</dbReference>
<dbReference type="InterPro" id="IPR011701">
    <property type="entry name" value="MFS"/>
</dbReference>
<dbReference type="InterPro" id="IPR020846">
    <property type="entry name" value="MFS_dom"/>
</dbReference>
<dbReference type="InterPro" id="IPR036259">
    <property type="entry name" value="MFS_trans_sf"/>
</dbReference>
<dbReference type="PANTHER" id="PTHR23501">
    <property type="entry name" value="MAJOR FACILITATOR SUPERFAMILY"/>
    <property type="match status" value="1"/>
</dbReference>
<dbReference type="PANTHER" id="PTHR23501:SF199">
    <property type="entry name" value="MFS EFFLUX TRANSPORTER INPD-RELATED"/>
    <property type="match status" value="1"/>
</dbReference>
<dbReference type="Pfam" id="PF07690">
    <property type="entry name" value="MFS_1"/>
    <property type="match status" value="1"/>
</dbReference>
<dbReference type="SUPFAM" id="SSF103473">
    <property type="entry name" value="MFS general substrate transporter"/>
    <property type="match status" value="1"/>
</dbReference>
<dbReference type="PROSITE" id="PS50850">
    <property type="entry name" value="MFS"/>
    <property type="match status" value="1"/>
</dbReference>
<reference key="1">
    <citation type="journal article" date="2015" name="Genome Announc.">
        <title>Draft genome sequence of the fungus Penicillium brasilianum MG11.</title>
        <authorList>
            <person name="Horn F."/>
            <person name="Linde J."/>
            <person name="Mattern D.J."/>
            <person name="Walther G."/>
            <person name="Guthke R."/>
            <person name="Brakhage A.A."/>
            <person name="Valiante V."/>
        </authorList>
    </citation>
    <scope>NUCLEOTIDE SEQUENCE [LARGE SCALE GENOMIC DNA]</scope>
    <source>
        <strain>MG11</strain>
    </source>
</reference>
<reference key="2">
    <citation type="journal article" date="2017" name="ACS Chem. Biol.">
        <title>Rewiring of the austinoid biosynthetic pathway in filamentous fungi.</title>
        <authorList>
            <person name="Mattern D.J."/>
            <person name="Valiante V."/>
            <person name="Horn F."/>
            <person name="Petzke L."/>
            <person name="Brakhage A.A."/>
        </authorList>
    </citation>
    <scope>FUNCTION</scope>
</reference>
<feature type="chain" id="PRO_0000453877" description="MFS-type transporter ausY">
    <location>
        <begin position="1"/>
        <end position="588"/>
    </location>
</feature>
<feature type="transmembrane region" description="Helical" evidence="1">
    <location>
        <begin position="85"/>
        <end position="105"/>
    </location>
</feature>
<feature type="transmembrane region" description="Helical" evidence="1">
    <location>
        <begin position="120"/>
        <end position="140"/>
    </location>
</feature>
<feature type="transmembrane region" description="Helical" evidence="1">
    <location>
        <begin position="150"/>
        <end position="170"/>
    </location>
</feature>
<feature type="transmembrane region" description="Helical" evidence="1">
    <location>
        <begin position="181"/>
        <end position="201"/>
    </location>
</feature>
<feature type="transmembrane region" description="Helical" evidence="1">
    <location>
        <begin position="208"/>
        <end position="228"/>
    </location>
</feature>
<feature type="transmembrane region" description="Helical" evidence="1">
    <location>
        <begin position="239"/>
        <end position="259"/>
    </location>
</feature>
<feature type="transmembrane region" description="Helical" evidence="1">
    <location>
        <begin position="284"/>
        <end position="304"/>
    </location>
</feature>
<feature type="transmembrane region" description="Helical" evidence="1">
    <location>
        <begin position="314"/>
        <end position="334"/>
    </location>
</feature>
<feature type="transmembrane region" description="Helical" evidence="1">
    <location>
        <begin position="355"/>
        <end position="375"/>
    </location>
</feature>
<feature type="transmembrane region" description="Helical" evidence="1">
    <location>
        <begin position="389"/>
        <end position="409"/>
    </location>
</feature>
<feature type="transmembrane region" description="Helical" evidence="1">
    <location>
        <begin position="418"/>
        <end position="438"/>
    </location>
</feature>
<feature type="transmembrane region" description="Helical" evidence="1">
    <location>
        <begin position="444"/>
        <end position="464"/>
    </location>
</feature>
<feature type="transmembrane region" description="Helical" evidence="1">
    <location>
        <begin position="478"/>
        <end position="498"/>
    </location>
</feature>
<feature type="transmembrane region" description="Helical" evidence="1">
    <location>
        <begin position="554"/>
        <end position="574"/>
    </location>
</feature>
<feature type="region of interest" description="Disordered" evidence="2">
    <location>
        <begin position="1"/>
        <end position="28"/>
    </location>
</feature>
<feature type="compositionally biased region" description="Basic and acidic residues" evidence="2">
    <location>
        <begin position="1"/>
        <end position="10"/>
    </location>
</feature>
<organism>
    <name type="scientific">Penicillium brasilianum</name>
    <dbReference type="NCBI Taxonomy" id="104259"/>
    <lineage>
        <taxon>Eukaryota</taxon>
        <taxon>Fungi</taxon>
        <taxon>Dikarya</taxon>
        <taxon>Ascomycota</taxon>
        <taxon>Pezizomycotina</taxon>
        <taxon>Eurotiomycetes</taxon>
        <taxon>Eurotiomycetidae</taxon>
        <taxon>Eurotiales</taxon>
        <taxon>Aspergillaceae</taxon>
        <taxon>Penicillium</taxon>
    </lineage>
</organism>